<protein>
    <recommendedName>
        <fullName evidence="1">Ribulose bisphosphate carboxylase large chain</fullName>
        <shortName evidence="1">RuBisCO large subunit</shortName>
        <ecNumber evidence="1">4.1.1.39</ecNumber>
    </recommendedName>
</protein>
<reference key="1">
    <citation type="journal article" date="1998" name="Biol. Pharm. Bull.">
        <title>Phylogenetic relationship of Glycyrrhiza plants based on rbcL sequences.</title>
        <authorList>
            <person name="Hayashi H."/>
            <person name="Hosono N."/>
            <person name="Kondo M."/>
            <person name="Hiraoka N."/>
            <person name="Ikeshiro Y."/>
        </authorList>
    </citation>
    <scope>NUCLEOTIDE SEQUENCE [GENOMIC DNA]</scope>
    <source>
        <tissue>Leaf</tissue>
    </source>
</reference>
<accession>O62970</accession>
<geneLocation type="chloroplast"/>
<feature type="chain" id="PRO_0000062483" description="Ribulose bisphosphate carboxylase large chain">
    <location>
        <begin position="1" status="less than"/>
        <end position="441" status="greater than"/>
    </location>
</feature>
<feature type="active site" description="Proton acceptor" evidence="1">
    <location>
        <position position="166"/>
    </location>
</feature>
<feature type="active site" description="Proton acceptor" evidence="1">
    <location>
        <position position="285"/>
    </location>
</feature>
<feature type="binding site" description="in homodimeric partner" evidence="1">
    <location>
        <position position="114"/>
    </location>
    <ligand>
        <name>substrate</name>
    </ligand>
</feature>
<feature type="binding site" evidence="1">
    <location>
        <position position="164"/>
    </location>
    <ligand>
        <name>substrate</name>
    </ligand>
</feature>
<feature type="binding site" evidence="1">
    <location>
        <position position="168"/>
    </location>
    <ligand>
        <name>substrate</name>
    </ligand>
</feature>
<feature type="binding site" description="via carbamate group" evidence="1">
    <location>
        <position position="192"/>
    </location>
    <ligand>
        <name>Mg(2+)</name>
        <dbReference type="ChEBI" id="CHEBI:18420"/>
    </ligand>
</feature>
<feature type="binding site" evidence="1">
    <location>
        <position position="194"/>
    </location>
    <ligand>
        <name>Mg(2+)</name>
        <dbReference type="ChEBI" id="CHEBI:18420"/>
    </ligand>
</feature>
<feature type="binding site" evidence="1">
    <location>
        <position position="195"/>
    </location>
    <ligand>
        <name>Mg(2+)</name>
        <dbReference type="ChEBI" id="CHEBI:18420"/>
    </ligand>
</feature>
<feature type="binding site" evidence="1">
    <location>
        <position position="286"/>
    </location>
    <ligand>
        <name>substrate</name>
    </ligand>
</feature>
<feature type="binding site" evidence="1">
    <location>
        <position position="318"/>
    </location>
    <ligand>
        <name>substrate</name>
    </ligand>
</feature>
<feature type="binding site" evidence="1">
    <location>
        <position position="370"/>
    </location>
    <ligand>
        <name>substrate</name>
    </ligand>
</feature>
<feature type="site" description="Transition state stabilizer" evidence="1">
    <location>
        <position position="325"/>
    </location>
</feature>
<feature type="modified residue" description="N6,N6,N6-trimethyllysine" evidence="1">
    <location>
        <position position="5"/>
    </location>
</feature>
<feature type="modified residue" description="N6-carboxylysine" evidence="1">
    <location>
        <position position="192"/>
    </location>
</feature>
<feature type="disulfide bond" description="Interchain; in linked form" evidence="1">
    <location>
        <position position="238"/>
    </location>
</feature>
<feature type="non-terminal residue">
    <location>
        <position position="1"/>
    </location>
</feature>
<feature type="non-terminal residue">
    <location>
        <position position="441"/>
    </location>
</feature>
<proteinExistence type="inferred from homology"/>
<gene>
    <name evidence="1" type="primary">rbcL</name>
</gene>
<dbReference type="EC" id="4.1.1.39" evidence="1"/>
<dbReference type="EMBL" id="AB012128">
    <property type="protein sequence ID" value="BAA25367.1"/>
    <property type="molecule type" value="Genomic_DNA"/>
</dbReference>
<dbReference type="SMR" id="O62970"/>
<dbReference type="GO" id="GO:0009507">
    <property type="term" value="C:chloroplast"/>
    <property type="evidence" value="ECO:0007669"/>
    <property type="project" value="UniProtKB-SubCell"/>
</dbReference>
<dbReference type="GO" id="GO:0000287">
    <property type="term" value="F:magnesium ion binding"/>
    <property type="evidence" value="ECO:0007669"/>
    <property type="project" value="InterPro"/>
</dbReference>
<dbReference type="GO" id="GO:0004497">
    <property type="term" value="F:monooxygenase activity"/>
    <property type="evidence" value="ECO:0007669"/>
    <property type="project" value="UniProtKB-KW"/>
</dbReference>
<dbReference type="GO" id="GO:0016984">
    <property type="term" value="F:ribulose-bisphosphate carboxylase activity"/>
    <property type="evidence" value="ECO:0007669"/>
    <property type="project" value="UniProtKB-EC"/>
</dbReference>
<dbReference type="GO" id="GO:0009853">
    <property type="term" value="P:photorespiration"/>
    <property type="evidence" value="ECO:0007669"/>
    <property type="project" value="UniProtKB-KW"/>
</dbReference>
<dbReference type="GO" id="GO:0019253">
    <property type="term" value="P:reductive pentose-phosphate cycle"/>
    <property type="evidence" value="ECO:0007669"/>
    <property type="project" value="UniProtKB-KW"/>
</dbReference>
<dbReference type="CDD" id="cd08212">
    <property type="entry name" value="RuBisCO_large_I"/>
    <property type="match status" value="1"/>
</dbReference>
<dbReference type="FunFam" id="3.20.20.110:FF:000003">
    <property type="entry name" value="Ribulose bisphosphate carboxylase large chain"/>
    <property type="match status" value="1"/>
</dbReference>
<dbReference type="FunFam" id="3.30.70.150:FF:000001">
    <property type="entry name" value="Ribulose bisphosphate carboxylase large chain"/>
    <property type="match status" value="1"/>
</dbReference>
<dbReference type="Gene3D" id="3.20.20.110">
    <property type="entry name" value="Ribulose bisphosphate carboxylase, large subunit, C-terminal domain"/>
    <property type="match status" value="1"/>
</dbReference>
<dbReference type="Gene3D" id="3.30.70.150">
    <property type="entry name" value="RuBisCO large subunit, N-terminal domain"/>
    <property type="match status" value="1"/>
</dbReference>
<dbReference type="HAMAP" id="MF_01338">
    <property type="entry name" value="RuBisCO_L_type1"/>
    <property type="match status" value="1"/>
</dbReference>
<dbReference type="InterPro" id="IPR033966">
    <property type="entry name" value="RuBisCO"/>
</dbReference>
<dbReference type="InterPro" id="IPR020878">
    <property type="entry name" value="RuBisCo_large_chain_AS"/>
</dbReference>
<dbReference type="InterPro" id="IPR000685">
    <property type="entry name" value="RuBisCO_lsu_C"/>
</dbReference>
<dbReference type="InterPro" id="IPR036376">
    <property type="entry name" value="RuBisCO_lsu_C_sf"/>
</dbReference>
<dbReference type="InterPro" id="IPR017443">
    <property type="entry name" value="RuBisCO_lsu_fd_N"/>
</dbReference>
<dbReference type="InterPro" id="IPR036422">
    <property type="entry name" value="RuBisCO_lsu_N_sf"/>
</dbReference>
<dbReference type="InterPro" id="IPR020888">
    <property type="entry name" value="RuBisCO_lsuI"/>
</dbReference>
<dbReference type="NCBIfam" id="NF003252">
    <property type="entry name" value="PRK04208.1"/>
    <property type="match status" value="1"/>
</dbReference>
<dbReference type="PANTHER" id="PTHR42704">
    <property type="entry name" value="RIBULOSE BISPHOSPHATE CARBOXYLASE"/>
    <property type="match status" value="1"/>
</dbReference>
<dbReference type="PANTHER" id="PTHR42704:SF16">
    <property type="entry name" value="RIBULOSE BISPHOSPHATE CARBOXYLASE LARGE CHAIN"/>
    <property type="match status" value="1"/>
</dbReference>
<dbReference type="Pfam" id="PF00016">
    <property type="entry name" value="RuBisCO_large"/>
    <property type="match status" value="1"/>
</dbReference>
<dbReference type="Pfam" id="PF02788">
    <property type="entry name" value="RuBisCO_large_N"/>
    <property type="match status" value="1"/>
</dbReference>
<dbReference type="SFLD" id="SFLDG01052">
    <property type="entry name" value="RuBisCO"/>
    <property type="match status" value="1"/>
</dbReference>
<dbReference type="SFLD" id="SFLDS00014">
    <property type="entry name" value="RuBisCO"/>
    <property type="match status" value="1"/>
</dbReference>
<dbReference type="SFLD" id="SFLDG00301">
    <property type="entry name" value="RuBisCO-like_proteins"/>
    <property type="match status" value="1"/>
</dbReference>
<dbReference type="SUPFAM" id="SSF51649">
    <property type="entry name" value="RuBisCo, C-terminal domain"/>
    <property type="match status" value="1"/>
</dbReference>
<dbReference type="SUPFAM" id="SSF54966">
    <property type="entry name" value="RuBisCO, large subunit, small (N-terminal) domain"/>
    <property type="match status" value="1"/>
</dbReference>
<dbReference type="PROSITE" id="PS00157">
    <property type="entry name" value="RUBISCO_LARGE"/>
    <property type="match status" value="1"/>
</dbReference>
<sequence length="441" mass="48720">SVGFKAGVKDYKLTYYTPEYETKDTDILAAFRVTPQPGVPPEEAGAAVAAESSTGTWTTVWTDGLTSLDRYKGRCYGLEPVAGEENQYIAYVAYPLDLFEEGSVTNMFTSIVGNVFGFKALRALRLEDLRIPVSYIKTFQGPPHGIQVERDKLNKYGRPLLGCTIKPKLGLSAKNYGRAVYECLRGGLDFTKDDENVNSQPFMRWRDRFLFCAEAIYKAQAETGEIKGHYLNATAGTCEEMIKRAVFARELGAPIVMHDYLTGGFTANTSLAHYCRDNGLLLHIHRAMHAVIDRQKNHGMHFRVLAKALRLSGGDHIHAGTVVGKLEGEREITLGFVDLLRDDFVEKDRSRGIYFTQDWVSLPGVLPVASGGIHVWHMPALTEIFGDDSVLQFGGGTLGHPWGNAPGAVANRVALEACVQARNEGRDLAREGNEIIRQACK</sequence>
<name>RBL_GLYEC</name>
<evidence type="ECO:0000255" key="1">
    <source>
        <dbReference type="HAMAP-Rule" id="MF_01338"/>
    </source>
</evidence>
<keyword id="KW-0113">Calvin cycle</keyword>
<keyword id="KW-0120">Carbon dioxide fixation</keyword>
<keyword id="KW-0150">Chloroplast</keyword>
<keyword id="KW-1015">Disulfide bond</keyword>
<keyword id="KW-0456">Lyase</keyword>
<keyword id="KW-0460">Magnesium</keyword>
<keyword id="KW-0479">Metal-binding</keyword>
<keyword id="KW-0488">Methylation</keyword>
<keyword id="KW-0503">Monooxygenase</keyword>
<keyword id="KW-0560">Oxidoreductase</keyword>
<keyword id="KW-0601">Photorespiration</keyword>
<keyword id="KW-0602">Photosynthesis</keyword>
<keyword id="KW-0934">Plastid</keyword>
<comment type="function">
    <text evidence="1">RuBisCO catalyzes two reactions: the carboxylation of D-ribulose 1,5-bisphosphate, the primary event in carbon dioxide fixation, as well as the oxidative fragmentation of the pentose substrate in the photorespiration process. Both reactions occur simultaneously and in competition at the same active site.</text>
</comment>
<comment type="catalytic activity">
    <reaction evidence="1">
        <text>2 (2R)-3-phosphoglycerate + 2 H(+) = D-ribulose 1,5-bisphosphate + CO2 + H2O</text>
        <dbReference type="Rhea" id="RHEA:23124"/>
        <dbReference type="ChEBI" id="CHEBI:15377"/>
        <dbReference type="ChEBI" id="CHEBI:15378"/>
        <dbReference type="ChEBI" id="CHEBI:16526"/>
        <dbReference type="ChEBI" id="CHEBI:57870"/>
        <dbReference type="ChEBI" id="CHEBI:58272"/>
        <dbReference type="EC" id="4.1.1.39"/>
    </reaction>
</comment>
<comment type="catalytic activity">
    <reaction evidence="1">
        <text>D-ribulose 1,5-bisphosphate + O2 = 2-phosphoglycolate + (2R)-3-phosphoglycerate + 2 H(+)</text>
        <dbReference type="Rhea" id="RHEA:36631"/>
        <dbReference type="ChEBI" id="CHEBI:15378"/>
        <dbReference type="ChEBI" id="CHEBI:15379"/>
        <dbReference type="ChEBI" id="CHEBI:57870"/>
        <dbReference type="ChEBI" id="CHEBI:58033"/>
        <dbReference type="ChEBI" id="CHEBI:58272"/>
    </reaction>
</comment>
<comment type="cofactor">
    <cofactor evidence="1">
        <name>Mg(2+)</name>
        <dbReference type="ChEBI" id="CHEBI:18420"/>
    </cofactor>
    <text evidence="1">Binds 1 Mg(2+) ion per subunit.</text>
</comment>
<comment type="subunit">
    <text evidence="1">Heterohexadecamer of 8 large chains and 8 small chains; disulfide-linked. The disulfide link is formed within the large subunit homodimers.</text>
</comment>
<comment type="subcellular location">
    <subcellularLocation>
        <location>Plastid</location>
        <location>Chloroplast</location>
    </subcellularLocation>
</comment>
<comment type="PTM">
    <text evidence="1">The disulfide bond which can form in the large chain dimeric partners within the hexadecamer appears to be associated with oxidative stress and protein turnover.</text>
</comment>
<comment type="miscellaneous">
    <text evidence="1">The basic functional RuBisCO is composed of a large chain homodimer in a 'head-to-tail' conformation. In form I RuBisCO this homodimer is arranged in a barrel-like tetramer with the small subunits forming a tetrameric 'cap' on each end of the 'barrel'.</text>
</comment>
<comment type="similarity">
    <text evidence="1">Belongs to the RuBisCO large chain family. Type I subfamily.</text>
</comment>
<organism>
    <name type="scientific">Glycyrrhiza echinata</name>
    <name type="common">Licorice</name>
    <dbReference type="NCBI Taxonomy" id="46348"/>
    <lineage>
        <taxon>Eukaryota</taxon>
        <taxon>Viridiplantae</taxon>
        <taxon>Streptophyta</taxon>
        <taxon>Embryophyta</taxon>
        <taxon>Tracheophyta</taxon>
        <taxon>Spermatophyta</taxon>
        <taxon>Magnoliopsida</taxon>
        <taxon>eudicotyledons</taxon>
        <taxon>Gunneridae</taxon>
        <taxon>Pentapetalae</taxon>
        <taxon>rosids</taxon>
        <taxon>fabids</taxon>
        <taxon>Fabales</taxon>
        <taxon>Fabaceae</taxon>
        <taxon>Papilionoideae</taxon>
        <taxon>50 kb inversion clade</taxon>
        <taxon>NPAAA clade</taxon>
        <taxon>Hologalegina</taxon>
        <taxon>IRL clade</taxon>
        <taxon>Galegeae</taxon>
        <taxon>Glycyrrhiza</taxon>
    </lineage>
</organism>